<dbReference type="EMBL" id="AM180355">
    <property type="protein sequence ID" value="CAJ66897.1"/>
    <property type="molecule type" value="Genomic_DNA"/>
</dbReference>
<dbReference type="RefSeq" id="WP_003421156.1">
    <property type="nucleotide sequence ID" value="NZ_JAUPES010000043.1"/>
</dbReference>
<dbReference type="RefSeq" id="YP_001086546.1">
    <property type="nucleotide sequence ID" value="NC_009089.1"/>
</dbReference>
<dbReference type="SMR" id="Q18CG8"/>
<dbReference type="STRING" id="272563.CD630_00810"/>
<dbReference type="EnsemblBacteria" id="CAJ66897">
    <property type="protein sequence ID" value="CAJ66897"/>
    <property type="gene ID" value="CD630_00810"/>
</dbReference>
<dbReference type="GeneID" id="66352580"/>
<dbReference type="KEGG" id="cdf:CD630_00810"/>
<dbReference type="KEGG" id="pdc:CDIF630_00148"/>
<dbReference type="PATRIC" id="fig|272563.120.peg.88"/>
<dbReference type="eggNOG" id="COG0186">
    <property type="taxonomic scope" value="Bacteria"/>
</dbReference>
<dbReference type="OrthoDB" id="9811714at2"/>
<dbReference type="PhylomeDB" id="Q18CG8"/>
<dbReference type="BioCyc" id="PDIF272563:G12WB-136-MONOMER"/>
<dbReference type="Proteomes" id="UP000001978">
    <property type="component" value="Chromosome"/>
</dbReference>
<dbReference type="GO" id="GO:0022627">
    <property type="term" value="C:cytosolic small ribosomal subunit"/>
    <property type="evidence" value="ECO:0007669"/>
    <property type="project" value="TreeGrafter"/>
</dbReference>
<dbReference type="GO" id="GO:0019843">
    <property type="term" value="F:rRNA binding"/>
    <property type="evidence" value="ECO:0007669"/>
    <property type="project" value="UniProtKB-UniRule"/>
</dbReference>
<dbReference type="GO" id="GO:0003735">
    <property type="term" value="F:structural constituent of ribosome"/>
    <property type="evidence" value="ECO:0007669"/>
    <property type="project" value="InterPro"/>
</dbReference>
<dbReference type="GO" id="GO:0006412">
    <property type="term" value="P:translation"/>
    <property type="evidence" value="ECO:0007669"/>
    <property type="project" value="UniProtKB-UniRule"/>
</dbReference>
<dbReference type="CDD" id="cd00364">
    <property type="entry name" value="Ribosomal_uS17"/>
    <property type="match status" value="1"/>
</dbReference>
<dbReference type="FunFam" id="2.40.50.140:FF:000123">
    <property type="entry name" value="30S ribosomal protein S17"/>
    <property type="match status" value="1"/>
</dbReference>
<dbReference type="Gene3D" id="2.40.50.140">
    <property type="entry name" value="Nucleic acid-binding proteins"/>
    <property type="match status" value="1"/>
</dbReference>
<dbReference type="HAMAP" id="MF_01345_B">
    <property type="entry name" value="Ribosomal_uS17_B"/>
    <property type="match status" value="1"/>
</dbReference>
<dbReference type="InterPro" id="IPR012340">
    <property type="entry name" value="NA-bd_OB-fold"/>
</dbReference>
<dbReference type="InterPro" id="IPR000266">
    <property type="entry name" value="Ribosomal_uS17"/>
</dbReference>
<dbReference type="InterPro" id="IPR019984">
    <property type="entry name" value="Ribosomal_uS17_bact/chlr"/>
</dbReference>
<dbReference type="InterPro" id="IPR019979">
    <property type="entry name" value="Ribosomal_uS17_CS"/>
</dbReference>
<dbReference type="NCBIfam" id="NF004123">
    <property type="entry name" value="PRK05610.1"/>
    <property type="match status" value="1"/>
</dbReference>
<dbReference type="NCBIfam" id="TIGR03635">
    <property type="entry name" value="uS17_bact"/>
    <property type="match status" value="1"/>
</dbReference>
<dbReference type="PANTHER" id="PTHR10744">
    <property type="entry name" value="40S RIBOSOMAL PROTEIN S11 FAMILY MEMBER"/>
    <property type="match status" value="1"/>
</dbReference>
<dbReference type="PANTHER" id="PTHR10744:SF1">
    <property type="entry name" value="SMALL RIBOSOMAL SUBUNIT PROTEIN US17M"/>
    <property type="match status" value="1"/>
</dbReference>
<dbReference type="Pfam" id="PF00366">
    <property type="entry name" value="Ribosomal_S17"/>
    <property type="match status" value="1"/>
</dbReference>
<dbReference type="PRINTS" id="PR00973">
    <property type="entry name" value="RIBOSOMALS17"/>
</dbReference>
<dbReference type="SUPFAM" id="SSF50249">
    <property type="entry name" value="Nucleic acid-binding proteins"/>
    <property type="match status" value="1"/>
</dbReference>
<dbReference type="PROSITE" id="PS00056">
    <property type="entry name" value="RIBOSOMAL_S17"/>
    <property type="match status" value="1"/>
</dbReference>
<comment type="function">
    <text evidence="1">One of the primary rRNA binding proteins, it binds specifically to the 5'-end of 16S ribosomal RNA.</text>
</comment>
<comment type="subunit">
    <text evidence="1">Part of the 30S ribosomal subunit.</text>
</comment>
<comment type="similarity">
    <text evidence="1">Belongs to the universal ribosomal protein uS17 family.</text>
</comment>
<proteinExistence type="inferred from homology"/>
<name>RS17_CLOD6</name>
<accession>Q18CG8</accession>
<organism>
    <name type="scientific">Clostridioides difficile (strain 630)</name>
    <name type="common">Peptoclostridium difficile</name>
    <dbReference type="NCBI Taxonomy" id="272563"/>
    <lineage>
        <taxon>Bacteria</taxon>
        <taxon>Bacillati</taxon>
        <taxon>Bacillota</taxon>
        <taxon>Clostridia</taxon>
        <taxon>Peptostreptococcales</taxon>
        <taxon>Peptostreptococcaceae</taxon>
        <taxon>Clostridioides</taxon>
    </lineage>
</organism>
<gene>
    <name evidence="1" type="primary">rpsQ</name>
    <name type="ordered locus">CD630_00810</name>
</gene>
<protein>
    <recommendedName>
        <fullName evidence="1">Small ribosomal subunit protein uS17</fullName>
    </recommendedName>
    <alternativeName>
        <fullName evidence="2">30S ribosomal protein S17</fullName>
    </alternativeName>
</protein>
<feature type="chain" id="PRO_1000054941" description="Small ribosomal subunit protein uS17">
    <location>
        <begin position="1"/>
        <end position="84"/>
    </location>
</feature>
<evidence type="ECO:0000255" key="1">
    <source>
        <dbReference type="HAMAP-Rule" id="MF_01345"/>
    </source>
</evidence>
<evidence type="ECO:0000305" key="2"/>
<reference key="1">
    <citation type="journal article" date="2006" name="Nat. Genet.">
        <title>The multidrug-resistant human pathogen Clostridium difficile has a highly mobile, mosaic genome.</title>
        <authorList>
            <person name="Sebaihia M."/>
            <person name="Wren B.W."/>
            <person name="Mullany P."/>
            <person name="Fairweather N.F."/>
            <person name="Minton N."/>
            <person name="Stabler R."/>
            <person name="Thomson N.R."/>
            <person name="Roberts A.P."/>
            <person name="Cerdeno-Tarraga A.M."/>
            <person name="Wang H."/>
            <person name="Holden M.T.G."/>
            <person name="Wright A."/>
            <person name="Churcher C."/>
            <person name="Quail M.A."/>
            <person name="Baker S."/>
            <person name="Bason N."/>
            <person name="Brooks K."/>
            <person name="Chillingworth T."/>
            <person name="Cronin A."/>
            <person name="Davis P."/>
            <person name="Dowd L."/>
            <person name="Fraser A."/>
            <person name="Feltwell T."/>
            <person name="Hance Z."/>
            <person name="Holroyd S."/>
            <person name="Jagels K."/>
            <person name="Moule S."/>
            <person name="Mungall K."/>
            <person name="Price C."/>
            <person name="Rabbinowitsch E."/>
            <person name="Sharp S."/>
            <person name="Simmonds M."/>
            <person name="Stevens K."/>
            <person name="Unwin L."/>
            <person name="Whithead S."/>
            <person name="Dupuy B."/>
            <person name="Dougan G."/>
            <person name="Barrell B."/>
            <person name="Parkhill J."/>
        </authorList>
    </citation>
    <scope>NUCLEOTIDE SEQUENCE [LARGE SCALE GENOMIC DNA]</scope>
    <source>
        <strain>630</strain>
    </source>
</reference>
<sequence>MERGRRKVRIGRVVSDKMDKTIVVAVEEFVRHPLYNKRVKRTKKFKAHDEKNICNIGDRVKIMETRPLSKDKRFRLVEVVEKVK</sequence>
<keyword id="KW-1185">Reference proteome</keyword>
<keyword id="KW-0687">Ribonucleoprotein</keyword>
<keyword id="KW-0689">Ribosomal protein</keyword>
<keyword id="KW-0694">RNA-binding</keyword>
<keyword id="KW-0699">rRNA-binding</keyword>